<dbReference type="EMBL" id="CP000020">
    <property type="protein sequence ID" value="AAW85446.1"/>
    <property type="molecule type" value="Genomic_DNA"/>
</dbReference>
<dbReference type="RefSeq" id="WP_005418603.1">
    <property type="nucleotide sequence ID" value="NZ_CAWLES010000001.1"/>
</dbReference>
<dbReference type="RefSeq" id="YP_204334.1">
    <property type="nucleotide sequence ID" value="NC_006840.2"/>
</dbReference>
<dbReference type="SMR" id="Q5E6A0"/>
<dbReference type="STRING" id="312309.VF_0951"/>
<dbReference type="EnsemblBacteria" id="AAW85446">
    <property type="protein sequence ID" value="AAW85446"/>
    <property type="gene ID" value="VF_0951"/>
</dbReference>
<dbReference type="GeneID" id="54163621"/>
<dbReference type="KEGG" id="vfi:VF_0951"/>
<dbReference type="PATRIC" id="fig|312309.11.peg.949"/>
<dbReference type="eggNOG" id="COG0632">
    <property type="taxonomic scope" value="Bacteria"/>
</dbReference>
<dbReference type="HOGENOM" id="CLU_087936_0_0_6"/>
<dbReference type="OrthoDB" id="5293449at2"/>
<dbReference type="Proteomes" id="UP000000537">
    <property type="component" value="Chromosome I"/>
</dbReference>
<dbReference type="GO" id="GO:0005737">
    <property type="term" value="C:cytoplasm"/>
    <property type="evidence" value="ECO:0007669"/>
    <property type="project" value="UniProtKB-SubCell"/>
</dbReference>
<dbReference type="GO" id="GO:0009379">
    <property type="term" value="C:Holliday junction helicase complex"/>
    <property type="evidence" value="ECO:0007669"/>
    <property type="project" value="InterPro"/>
</dbReference>
<dbReference type="GO" id="GO:0048476">
    <property type="term" value="C:Holliday junction resolvase complex"/>
    <property type="evidence" value="ECO:0007669"/>
    <property type="project" value="UniProtKB-UniRule"/>
</dbReference>
<dbReference type="GO" id="GO:0005524">
    <property type="term" value="F:ATP binding"/>
    <property type="evidence" value="ECO:0007669"/>
    <property type="project" value="InterPro"/>
</dbReference>
<dbReference type="GO" id="GO:0000400">
    <property type="term" value="F:four-way junction DNA binding"/>
    <property type="evidence" value="ECO:0007669"/>
    <property type="project" value="UniProtKB-UniRule"/>
</dbReference>
<dbReference type="GO" id="GO:0009378">
    <property type="term" value="F:four-way junction helicase activity"/>
    <property type="evidence" value="ECO:0007669"/>
    <property type="project" value="InterPro"/>
</dbReference>
<dbReference type="GO" id="GO:0006310">
    <property type="term" value="P:DNA recombination"/>
    <property type="evidence" value="ECO:0007669"/>
    <property type="project" value="UniProtKB-UniRule"/>
</dbReference>
<dbReference type="GO" id="GO:0006281">
    <property type="term" value="P:DNA repair"/>
    <property type="evidence" value="ECO:0007669"/>
    <property type="project" value="UniProtKB-UniRule"/>
</dbReference>
<dbReference type="CDD" id="cd14332">
    <property type="entry name" value="UBA_RuvA_C"/>
    <property type="match status" value="1"/>
</dbReference>
<dbReference type="FunFam" id="1.10.150.20:FF:000012">
    <property type="entry name" value="Holliday junction ATP-dependent DNA helicase RuvA"/>
    <property type="match status" value="1"/>
</dbReference>
<dbReference type="FunFam" id="2.40.50.140:FF:000083">
    <property type="entry name" value="Holliday junction ATP-dependent DNA helicase RuvA"/>
    <property type="match status" value="1"/>
</dbReference>
<dbReference type="Gene3D" id="1.10.150.20">
    <property type="entry name" value="5' to 3' exonuclease, C-terminal subdomain"/>
    <property type="match status" value="1"/>
</dbReference>
<dbReference type="Gene3D" id="1.10.8.10">
    <property type="entry name" value="DNA helicase RuvA subunit, C-terminal domain"/>
    <property type="match status" value="1"/>
</dbReference>
<dbReference type="Gene3D" id="2.40.50.140">
    <property type="entry name" value="Nucleic acid-binding proteins"/>
    <property type="match status" value="1"/>
</dbReference>
<dbReference type="HAMAP" id="MF_00031">
    <property type="entry name" value="DNA_HJ_migration_RuvA"/>
    <property type="match status" value="1"/>
</dbReference>
<dbReference type="InterPro" id="IPR013849">
    <property type="entry name" value="DNA_helicase_Holl-junc_RuvA_I"/>
</dbReference>
<dbReference type="InterPro" id="IPR003583">
    <property type="entry name" value="Hlx-hairpin-Hlx_DNA-bd_motif"/>
</dbReference>
<dbReference type="InterPro" id="IPR012340">
    <property type="entry name" value="NA-bd_OB-fold"/>
</dbReference>
<dbReference type="InterPro" id="IPR000085">
    <property type="entry name" value="RuvA"/>
</dbReference>
<dbReference type="InterPro" id="IPR010994">
    <property type="entry name" value="RuvA_2-like"/>
</dbReference>
<dbReference type="InterPro" id="IPR011114">
    <property type="entry name" value="RuvA_C"/>
</dbReference>
<dbReference type="InterPro" id="IPR036267">
    <property type="entry name" value="RuvA_C_sf"/>
</dbReference>
<dbReference type="NCBIfam" id="TIGR00084">
    <property type="entry name" value="ruvA"/>
    <property type="match status" value="1"/>
</dbReference>
<dbReference type="Pfam" id="PF14520">
    <property type="entry name" value="HHH_5"/>
    <property type="match status" value="1"/>
</dbReference>
<dbReference type="Pfam" id="PF07499">
    <property type="entry name" value="RuvA_C"/>
    <property type="match status" value="1"/>
</dbReference>
<dbReference type="Pfam" id="PF01330">
    <property type="entry name" value="RuvA_N"/>
    <property type="match status" value="1"/>
</dbReference>
<dbReference type="SMART" id="SM00278">
    <property type="entry name" value="HhH1"/>
    <property type="match status" value="2"/>
</dbReference>
<dbReference type="SUPFAM" id="SSF46929">
    <property type="entry name" value="DNA helicase RuvA subunit, C-terminal domain"/>
    <property type="match status" value="1"/>
</dbReference>
<dbReference type="SUPFAM" id="SSF50249">
    <property type="entry name" value="Nucleic acid-binding proteins"/>
    <property type="match status" value="1"/>
</dbReference>
<dbReference type="SUPFAM" id="SSF47781">
    <property type="entry name" value="RuvA domain 2-like"/>
    <property type="match status" value="1"/>
</dbReference>
<feature type="chain" id="PRO_0000094707" description="Holliday junction branch migration complex subunit RuvA">
    <location>
        <begin position="1"/>
        <end position="207"/>
    </location>
</feature>
<feature type="region of interest" description="Domain I" evidence="1">
    <location>
        <begin position="1"/>
        <end position="64"/>
    </location>
</feature>
<feature type="region of interest" description="Domain II" evidence="1">
    <location>
        <begin position="65"/>
        <end position="143"/>
    </location>
</feature>
<feature type="region of interest" description="Flexible linker" evidence="1">
    <location>
        <begin position="144"/>
        <end position="158"/>
    </location>
</feature>
<feature type="region of interest" description="Domain III" evidence="1">
    <location>
        <begin position="159"/>
        <end position="207"/>
    </location>
</feature>
<evidence type="ECO:0000255" key="1">
    <source>
        <dbReference type="HAMAP-Rule" id="MF_00031"/>
    </source>
</evidence>
<protein>
    <recommendedName>
        <fullName evidence="1">Holliday junction branch migration complex subunit RuvA</fullName>
    </recommendedName>
</protein>
<accession>Q5E6A0</accession>
<sequence length="207" mass="22565">MIGRLRGNLLEKQPPELLIEVSGIGYEVQMPMSCFYELPEVGSEAIIYTHYVVREDAQLLYGFNTKNERALFREVIKANGVGPKLGLAILSGMTAAQFVQSVEREDISTLVKLPGVGKKTAERLVVEMKDRLKGWGAGDLFTPATDAAPMDDGSEFITSPQSAVDEAVSALIALGYKPQQASKTVSQIAKPDMTSEVLIRESLKSMI</sequence>
<reference key="1">
    <citation type="journal article" date="2005" name="Proc. Natl. Acad. Sci. U.S.A.">
        <title>Complete genome sequence of Vibrio fischeri: a symbiotic bacterium with pathogenic congeners.</title>
        <authorList>
            <person name="Ruby E.G."/>
            <person name="Urbanowski M."/>
            <person name="Campbell J."/>
            <person name="Dunn A."/>
            <person name="Faini M."/>
            <person name="Gunsalus R."/>
            <person name="Lostroh P."/>
            <person name="Lupp C."/>
            <person name="McCann J."/>
            <person name="Millikan D."/>
            <person name="Schaefer A."/>
            <person name="Stabb E."/>
            <person name="Stevens A."/>
            <person name="Visick K."/>
            <person name="Whistler C."/>
            <person name="Greenberg E.P."/>
        </authorList>
    </citation>
    <scope>NUCLEOTIDE SEQUENCE [LARGE SCALE GENOMIC DNA]</scope>
    <source>
        <strain>ATCC 700601 / ES114</strain>
    </source>
</reference>
<proteinExistence type="inferred from homology"/>
<name>RUVA_ALIF1</name>
<comment type="function">
    <text evidence="1">The RuvA-RuvB-RuvC complex processes Holliday junction (HJ) DNA during genetic recombination and DNA repair, while the RuvA-RuvB complex plays an important role in the rescue of blocked DNA replication forks via replication fork reversal (RFR). RuvA specifically binds to HJ cruciform DNA, conferring on it an open structure. The RuvB hexamer acts as an ATP-dependent pump, pulling dsDNA into and through the RuvAB complex. HJ branch migration allows RuvC to scan DNA until it finds its consensus sequence, where it cleaves and resolves the cruciform DNA.</text>
</comment>
<comment type="subunit">
    <text evidence="1">Homotetramer. Forms an RuvA(8)-RuvB(12)-Holliday junction (HJ) complex. HJ DNA is sandwiched between 2 RuvA tetramers; dsDNA enters through RuvA and exits via RuvB. An RuvB hexamer assembles on each DNA strand where it exits the tetramer. Each RuvB hexamer is contacted by two RuvA subunits (via domain III) on 2 adjacent RuvB subunits; this complex drives branch migration. In the full resolvosome a probable DNA-RuvA(4)-RuvB(12)-RuvC(2) complex forms which resolves the HJ.</text>
</comment>
<comment type="subcellular location">
    <subcellularLocation>
        <location evidence="1">Cytoplasm</location>
    </subcellularLocation>
</comment>
<comment type="domain">
    <text evidence="1">Has three domains with a flexible linker between the domains II and III and assumes an 'L' shape. Domain III is highly mobile and contacts RuvB.</text>
</comment>
<comment type="similarity">
    <text evidence="1">Belongs to the RuvA family.</text>
</comment>
<keyword id="KW-0963">Cytoplasm</keyword>
<keyword id="KW-0227">DNA damage</keyword>
<keyword id="KW-0233">DNA recombination</keyword>
<keyword id="KW-0234">DNA repair</keyword>
<keyword id="KW-0238">DNA-binding</keyword>
<keyword id="KW-1185">Reference proteome</keyword>
<gene>
    <name evidence="1" type="primary">ruvA</name>
    <name type="ordered locus">VF_0951</name>
</gene>
<organism>
    <name type="scientific">Aliivibrio fischeri (strain ATCC 700601 / ES114)</name>
    <name type="common">Vibrio fischeri</name>
    <dbReference type="NCBI Taxonomy" id="312309"/>
    <lineage>
        <taxon>Bacteria</taxon>
        <taxon>Pseudomonadati</taxon>
        <taxon>Pseudomonadota</taxon>
        <taxon>Gammaproteobacteria</taxon>
        <taxon>Vibrionales</taxon>
        <taxon>Vibrionaceae</taxon>
        <taxon>Aliivibrio</taxon>
    </lineage>
</organism>